<organism>
    <name type="scientific">Psittacid herpesvirus 1 (isolate Amazon parrot/-/97-0001/1997)</name>
    <name type="common">PsHV-1</name>
    <name type="synonym">Pacheco's disease virus</name>
    <dbReference type="NCBI Taxonomy" id="670426"/>
    <lineage>
        <taxon>Viruses</taxon>
        <taxon>Duplodnaviria</taxon>
        <taxon>Heunggongvirae</taxon>
        <taxon>Peploviricota</taxon>
        <taxon>Herviviricetes</taxon>
        <taxon>Herpesvirales</taxon>
        <taxon>Orthoherpesviridae</taxon>
        <taxon>Alphaherpesvirinae</taxon>
        <taxon>Iltovirus</taxon>
        <taxon>Iltovirus psittacidalpha1</taxon>
        <taxon>Psittacid alphaherpesvirus 1</taxon>
    </lineage>
</organism>
<dbReference type="EMBL" id="AY372243">
    <property type="protein sequence ID" value="AAQ73749.1"/>
    <property type="molecule type" value="Genomic_DNA"/>
</dbReference>
<dbReference type="RefSeq" id="NP_944443.1">
    <property type="nucleotide sequence ID" value="NC_005264.1"/>
</dbReference>
<dbReference type="GeneID" id="2657007"/>
<dbReference type="KEGG" id="vg:2657007"/>
<dbReference type="Proteomes" id="UP000006840">
    <property type="component" value="Segment"/>
</dbReference>
<reference key="1">
    <citation type="journal article" date="2006" name="J. Virol.">
        <title>Psittacid herpesvirus 1 and infectious laryngotracheitis virus: Comparative genome sequence analysis of two avian alphaherpesviruses.</title>
        <authorList>
            <person name="Thureen D.R."/>
            <person name="Keeler C.L. Jr."/>
        </authorList>
    </citation>
    <scope>NUCLEOTIDE SEQUENCE [LARGE SCALE GENOMIC DNA]</scope>
</reference>
<name>US02_PSHV1</name>
<accession>Q6UDG1</accession>
<organismHost>
    <name type="scientific">Amazona oratrix</name>
    <name type="common">yellow-headed parrot</name>
    <dbReference type="NCBI Taxonomy" id="152276"/>
</organismHost>
<proteinExistence type="predicted"/>
<protein>
    <recommendedName>
        <fullName>Uncharacterized protein US2</fullName>
    </recommendedName>
</protein>
<gene>
    <name type="primary">US2</name>
</gene>
<sequence length="86" mass="9139">MSPARINVAACIDSSGSLPIELPVLSDAAGRELLNASPKMTESDDPVALPIIMRPTEPSCVCSVVLLLPRMRGPVIRISMGVPDWL</sequence>
<feature type="chain" id="PRO_0000406865" description="Uncharacterized protein US2">
    <location>
        <begin position="1"/>
        <end position="86"/>
    </location>
</feature>
<keyword id="KW-1185">Reference proteome</keyword>